<keyword id="KW-0067">ATP-binding</keyword>
<keyword id="KW-0131">Cell cycle</keyword>
<keyword id="KW-0132">Cell division</keyword>
<keyword id="KW-0418">Kinase</keyword>
<keyword id="KW-0498">Mitosis</keyword>
<keyword id="KW-0547">Nucleotide-binding</keyword>
<keyword id="KW-0539">Nucleus</keyword>
<keyword id="KW-0597">Phosphoprotein</keyword>
<keyword id="KW-1185">Reference proteome</keyword>
<keyword id="KW-0723">Serine/threonine-protein kinase</keyword>
<keyword id="KW-0808">Transferase</keyword>
<feature type="chain" id="PRO_0000085743" description="Cyclin-dependent kinase 1">
    <location>
        <begin position="1"/>
        <end position="297"/>
    </location>
</feature>
<feature type="domain" description="Protein kinase" evidence="3">
    <location>
        <begin position="4"/>
        <end position="287"/>
    </location>
</feature>
<feature type="active site" description="Proton acceptor" evidence="3 4">
    <location>
        <position position="128"/>
    </location>
</feature>
<feature type="binding site" evidence="3">
    <location>
        <begin position="10"/>
        <end position="18"/>
    </location>
    <ligand>
        <name>ATP</name>
        <dbReference type="ChEBI" id="CHEBI:30616"/>
    </ligand>
</feature>
<feature type="binding site" evidence="3">
    <location>
        <position position="33"/>
    </location>
    <ligand>
        <name>ATP</name>
        <dbReference type="ChEBI" id="CHEBI:30616"/>
    </ligand>
</feature>
<feature type="modified residue" description="Phosphothreonine" evidence="7">
    <location>
        <position position="14"/>
    </location>
</feature>
<feature type="modified residue" description="Phosphotyrosine" evidence="7">
    <location>
        <position position="15"/>
    </location>
</feature>
<feature type="modified residue" description="Phosphotyrosine" evidence="7">
    <location>
        <position position="160"/>
    </location>
</feature>
<feature type="modified residue" description="Phosphothreonine; by CAK" evidence="2">
    <location>
        <position position="161"/>
    </location>
</feature>
<feature type="mutagenesis site" description="In cdc2-E1-4; larval-pupal lethal with some adult escapers." evidence="11">
    <original>G</original>
    <variation>D</variation>
    <location>
        <position position="43"/>
    </location>
</feature>
<feature type="mutagenesis site" description="In cdc2-216A; larval-pupal lethal." evidence="10 11">
    <original>A</original>
    <variation>V</variation>
    <location>
        <position position="145"/>
    </location>
</feature>
<feature type="mutagenesis site" description="In cdc2-D57; embryonic or larval-pupal lethal." evidence="10 11">
    <original>G</original>
    <variation>R</variation>
    <location>
        <position position="148"/>
    </location>
</feature>
<feature type="mutagenesis site" description="In cdc2-E10; larval-pupal lethal." evidence="11">
    <original>L</original>
    <variation>Q</variation>
    <location>
        <position position="176"/>
    </location>
</feature>
<feature type="mutagenesis site" description="In cdc2-E1-24; larval-pupal lethal with some adult escapers." evidence="10 11">
    <original>E</original>
    <variation>K</variation>
    <location>
        <position position="196"/>
    </location>
</feature>
<feature type="mutagenesis site" description="In cdc2-E1-23; larval-pupal lethal." evidence="10 11">
    <original>G</original>
    <variation>D</variation>
    <location>
        <position position="206"/>
    </location>
</feature>
<feature type="mutagenesis site" description="In cdc2-E1-9; larval-pupal lethal." evidence="10 11">
    <original>P</original>
    <variation>S</variation>
    <location>
        <position position="242"/>
    </location>
</feature>
<reference key="1">
    <citation type="journal article" date="1990" name="EMBO J.">
        <title>Drosophila cdc2 homologs: a functional homolog is coexpressed with a cognate variant.</title>
        <authorList>
            <person name="Lehner C.F."/>
            <person name="O'Farrell P.H."/>
        </authorList>
    </citation>
    <scope>NUCLEOTIDE SEQUENCE [MRNA]</scope>
</reference>
<reference key="2">
    <citation type="journal article" date="1990" name="EMBO J.">
        <title>Complementation of fission yeast cdc2ts and cdc25ts mutants identifies two cell cycle genes from Drosophila: a cdc2 homologue and string.</title>
        <authorList>
            <person name="Jimenez J."/>
            <person name="Alphey L."/>
            <person name="Nurse P."/>
            <person name="Glover D.M."/>
        </authorList>
    </citation>
    <scope>NUCLEOTIDE SEQUENCE [MRNA]</scope>
    <scope>FUNCTION</scope>
    <scope>DEVELOPMENTAL STAGE</scope>
</reference>
<reference key="3">
    <citation type="journal article" date="1993" name="Development">
        <title>Genetic analysis of the Drosophila cdc2 homolog.</title>
        <authorList>
            <person name="Stern B."/>
            <person name="Ried G."/>
            <person name="Clegg N.J."/>
            <person name="Grigliatti T.A."/>
            <person name="Lehner C.F."/>
        </authorList>
    </citation>
    <scope>NUCLEOTIDE SEQUENCE [GENOMIC DNA / MRNA]</scope>
    <scope>MUTAGENESIS OF ALA-145; GLY-148; GLU-196; GLY-206 AND PRO-242</scope>
</reference>
<reference key="4">
    <citation type="journal article" date="2006" name="Genetics">
        <title>Widespread adaptive evolution of Drosophila genes with sex-biased expression.</title>
        <authorList>
            <person name="Proeschel M."/>
            <person name="Zhang Z."/>
            <person name="Parsch J."/>
        </authorList>
    </citation>
    <scope>NUCLEOTIDE SEQUENCE [GENOMIC DNA]</scope>
    <source>
        <strain>ZBMEL131</strain>
        <strain>ZBMEL145</strain>
        <strain>ZBMEL157</strain>
        <strain>ZBMEL186</strain>
        <strain>ZBMEL229</strain>
        <strain>ZBMEL377</strain>
        <strain>ZBMEL384</strain>
        <strain>ZBMEL398</strain>
        <strain>ZBMEL82</strain>
        <strain>ZBMEL84</strain>
        <strain>ZBMEL95</strain>
    </source>
</reference>
<reference key="5">
    <citation type="journal article" date="2000" name="Science">
        <title>The genome sequence of Drosophila melanogaster.</title>
        <authorList>
            <person name="Adams M.D."/>
            <person name="Celniker S.E."/>
            <person name="Holt R.A."/>
            <person name="Evans C.A."/>
            <person name="Gocayne J.D."/>
            <person name="Amanatides P.G."/>
            <person name="Scherer S.E."/>
            <person name="Li P.W."/>
            <person name="Hoskins R.A."/>
            <person name="Galle R.F."/>
            <person name="George R.A."/>
            <person name="Lewis S.E."/>
            <person name="Richards S."/>
            <person name="Ashburner M."/>
            <person name="Henderson S.N."/>
            <person name="Sutton G.G."/>
            <person name="Wortman J.R."/>
            <person name="Yandell M.D."/>
            <person name="Zhang Q."/>
            <person name="Chen L.X."/>
            <person name="Brandon R.C."/>
            <person name="Rogers Y.-H.C."/>
            <person name="Blazej R.G."/>
            <person name="Champe M."/>
            <person name="Pfeiffer B.D."/>
            <person name="Wan K.H."/>
            <person name="Doyle C."/>
            <person name="Baxter E.G."/>
            <person name="Helt G."/>
            <person name="Nelson C.R."/>
            <person name="Miklos G.L.G."/>
            <person name="Abril J.F."/>
            <person name="Agbayani A."/>
            <person name="An H.-J."/>
            <person name="Andrews-Pfannkoch C."/>
            <person name="Baldwin D."/>
            <person name="Ballew R.M."/>
            <person name="Basu A."/>
            <person name="Baxendale J."/>
            <person name="Bayraktaroglu L."/>
            <person name="Beasley E.M."/>
            <person name="Beeson K.Y."/>
            <person name="Benos P.V."/>
            <person name="Berman B.P."/>
            <person name="Bhandari D."/>
            <person name="Bolshakov S."/>
            <person name="Borkova D."/>
            <person name="Botchan M.R."/>
            <person name="Bouck J."/>
            <person name="Brokstein P."/>
            <person name="Brottier P."/>
            <person name="Burtis K.C."/>
            <person name="Busam D.A."/>
            <person name="Butler H."/>
            <person name="Cadieu E."/>
            <person name="Center A."/>
            <person name="Chandra I."/>
            <person name="Cherry J.M."/>
            <person name="Cawley S."/>
            <person name="Dahlke C."/>
            <person name="Davenport L.B."/>
            <person name="Davies P."/>
            <person name="de Pablos B."/>
            <person name="Delcher A."/>
            <person name="Deng Z."/>
            <person name="Mays A.D."/>
            <person name="Dew I."/>
            <person name="Dietz S.M."/>
            <person name="Dodson K."/>
            <person name="Doup L.E."/>
            <person name="Downes M."/>
            <person name="Dugan-Rocha S."/>
            <person name="Dunkov B.C."/>
            <person name="Dunn P."/>
            <person name="Durbin K.J."/>
            <person name="Evangelista C.C."/>
            <person name="Ferraz C."/>
            <person name="Ferriera S."/>
            <person name="Fleischmann W."/>
            <person name="Fosler C."/>
            <person name="Gabrielian A.E."/>
            <person name="Garg N.S."/>
            <person name="Gelbart W.M."/>
            <person name="Glasser K."/>
            <person name="Glodek A."/>
            <person name="Gong F."/>
            <person name="Gorrell J.H."/>
            <person name="Gu Z."/>
            <person name="Guan P."/>
            <person name="Harris M."/>
            <person name="Harris N.L."/>
            <person name="Harvey D.A."/>
            <person name="Heiman T.J."/>
            <person name="Hernandez J.R."/>
            <person name="Houck J."/>
            <person name="Hostin D."/>
            <person name="Houston K.A."/>
            <person name="Howland T.J."/>
            <person name="Wei M.-H."/>
            <person name="Ibegwam C."/>
            <person name="Jalali M."/>
            <person name="Kalush F."/>
            <person name="Karpen G.H."/>
            <person name="Ke Z."/>
            <person name="Kennison J.A."/>
            <person name="Ketchum K.A."/>
            <person name="Kimmel B.E."/>
            <person name="Kodira C.D."/>
            <person name="Kraft C.L."/>
            <person name="Kravitz S."/>
            <person name="Kulp D."/>
            <person name="Lai Z."/>
            <person name="Lasko P."/>
            <person name="Lei Y."/>
            <person name="Levitsky A.A."/>
            <person name="Li J.H."/>
            <person name="Li Z."/>
            <person name="Liang Y."/>
            <person name="Lin X."/>
            <person name="Liu X."/>
            <person name="Mattei B."/>
            <person name="McIntosh T.C."/>
            <person name="McLeod M.P."/>
            <person name="McPherson D."/>
            <person name="Merkulov G."/>
            <person name="Milshina N.V."/>
            <person name="Mobarry C."/>
            <person name="Morris J."/>
            <person name="Moshrefi A."/>
            <person name="Mount S.M."/>
            <person name="Moy M."/>
            <person name="Murphy B."/>
            <person name="Murphy L."/>
            <person name="Muzny D.M."/>
            <person name="Nelson D.L."/>
            <person name="Nelson D.R."/>
            <person name="Nelson K.A."/>
            <person name="Nixon K."/>
            <person name="Nusskern D.R."/>
            <person name="Pacleb J.M."/>
            <person name="Palazzolo M."/>
            <person name="Pittman G.S."/>
            <person name="Pan S."/>
            <person name="Pollard J."/>
            <person name="Puri V."/>
            <person name="Reese M.G."/>
            <person name="Reinert K."/>
            <person name="Remington K."/>
            <person name="Saunders R.D.C."/>
            <person name="Scheeler F."/>
            <person name="Shen H."/>
            <person name="Shue B.C."/>
            <person name="Siden-Kiamos I."/>
            <person name="Simpson M."/>
            <person name="Skupski M.P."/>
            <person name="Smith T.J."/>
            <person name="Spier E."/>
            <person name="Spradling A.C."/>
            <person name="Stapleton M."/>
            <person name="Strong R."/>
            <person name="Sun E."/>
            <person name="Svirskas R."/>
            <person name="Tector C."/>
            <person name="Turner R."/>
            <person name="Venter E."/>
            <person name="Wang A.H."/>
            <person name="Wang X."/>
            <person name="Wang Z.-Y."/>
            <person name="Wassarman D.A."/>
            <person name="Weinstock G.M."/>
            <person name="Weissenbach J."/>
            <person name="Williams S.M."/>
            <person name="Woodage T."/>
            <person name="Worley K.C."/>
            <person name="Wu D."/>
            <person name="Yang S."/>
            <person name="Yao Q.A."/>
            <person name="Ye J."/>
            <person name="Yeh R.-F."/>
            <person name="Zaveri J.S."/>
            <person name="Zhan M."/>
            <person name="Zhang G."/>
            <person name="Zhao Q."/>
            <person name="Zheng L."/>
            <person name="Zheng X.H."/>
            <person name="Zhong F.N."/>
            <person name="Zhong W."/>
            <person name="Zhou X."/>
            <person name="Zhu S.C."/>
            <person name="Zhu X."/>
            <person name="Smith H.O."/>
            <person name="Gibbs R.A."/>
            <person name="Myers E.W."/>
            <person name="Rubin G.M."/>
            <person name="Venter J.C."/>
        </authorList>
    </citation>
    <scope>NUCLEOTIDE SEQUENCE [LARGE SCALE GENOMIC DNA]</scope>
    <source>
        <strain>Berkeley</strain>
    </source>
</reference>
<reference key="6">
    <citation type="journal article" date="2002" name="Genome Biol.">
        <title>Annotation of the Drosophila melanogaster euchromatic genome: a systematic review.</title>
        <authorList>
            <person name="Misra S."/>
            <person name="Crosby M.A."/>
            <person name="Mungall C.J."/>
            <person name="Matthews B.B."/>
            <person name="Campbell K.S."/>
            <person name="Hradecky P."/>
            <person name="Huang Y."/>
            <person name="Kaminker J.S."/>
            <person name="Millburn G.H."/>
            <person name="Prochnik S.E."/>
            <person name="Smith C.D."/>
            <person name="Tupy J.L."/>
            <person name="Whitfield E.J."/>
            <person name="Bayraktaroglu L."/>
            <person name="Berman B.P."/>
            <person name="Bettencourt B.R."/>
            <person name="Celniker S.E."/>
            <person name="de Grey A.D.N.J."/>
            <person name="Drysdale R.A."/>
            <person name="Harris N.L."/>
            <person name="Richter J."/>
            <person name="Russo S."/>
            <person name="Schroeder A.J."/>
            <person name="Shu S.Q."/>
            <person name="Stapleton M."/>
            <person name="Yamada C."/>
            <person name="Ashburner M."/>
            <person name="Gelbart W.M."/>
            <person name="Rubin G.M."/>
            <person name="Lewis S.E."/>
        </authorList>
    </citation>
    <scope>GENOME REANNOTATION</scope>
    <source>
        <strain>Berkeley</strain>
    </source>
</reference>
<reference key="7">
    <citation type="journal article" date="2002" name="Genome Biol.">
        <title>A Drosophila full-length cDNA resource.</title>
        <authorList>
            <person name="Stapleton M."/>
            <person name="Carlson J.W."/>
            <person name="Brokstein P."/>
            <person name="Yu C."/>
            <person name="Champe M."/>
            <person name="George R.A."/>
            <person name="Guarin H."/>
            <person name="Kronmiller B."/>
            <person name="Pacleb J.M."/>
            <person name="Park S."/>
            <person name="Wan K.H."/>
            <person name="Rubin G.M."/>
            <person name="Celniker S.E."/>
        </authorList>
    </citation>
    <scope>NUCLEOTIDE SEQUENCE [LARGE SCALE MRNA]</scope>
    <source>
        <strain>Berkeley</strain>
    </source>
</reference>
<reference key="8">
    <citation type="journal article" date="1993" name="Genome">
        <title>A developmental and molecular analysis of cdc2 mutations in Drosophila melanogaster.</title>
        <authorList>
            <person name="Clegg N.J."/>
            <person name="Whitehead I.P."/>
            <person name="Williams J.A."/>
            <person name="Spiegelman G.B."/>
            <person name="Grigliatti T.A."/>
        </authorList>
    </citation>
    <scope>MUTAGENESIS OF GLY-43; ALA-145; GLY-148; LEU-176; GLU-196; GLY-206 AND PRO-242</scope>
    <scope>DEVELOPMENTAL STAGE</scope>
</reference>
<reference key="9">
    <citation type="journal article" date="2004" name="Dev. Biol.">
        <title>Mother-daughter precursor cell fate transformation after Cdc2 down-regulation in the Drosophila bristle lineage.</title>
        <authorList>
            <person name="Fichelson P."/>
            <person name="Gho M."/>
        </authorList>
    </citation>
    <scope>FUNCTION</scope>
</reference>
<reference key="10">
    <citation type="journal article" date="2007" name="EMBO Rep.">
        <title>The Drosophila mitotic inhibitor Fruehstart specifically binds to the hydrophobic patch of cyclins.</title>
        <authorList>
            <person name="Gawlinski P."/>
            <person name="Nikolay R."/>
            <person name="Goursot C."/>
            <person name="Lawo S."/>
            <person name="Chaurasia B."/>
            <person name="Herz H.M."/>
            <person name="Kussler-Schneider Y."/>
            <person name="Ruppert T."/>
            <person name="Mayer M."/>
            <person name="Grosshans J."/>
        </authorList>
    </citation>
    <scope>IDENTIFICATION IN A COMPLEX WITH CYCA AND Z600</scope>
</reference>
<reference key="11">
    <citation type="journal article" date="2008" name="J. Proteome Res.">
        <title>Phosphoproteome analysis of Drosophila melanogaster embryos.</title>
        <authorList>
            <person name="Zhai B."/>
            <person name="Villen J."/>
            <person name="Beausoleil S.A."/>
            <person name="Mintseris J."/>
            <person name="Gygi S.P."/>
        </authorList>
    </citation>
    <scope>PHOSPHORYLATION [LARGE SCALE ANALYSIS] AT THR-14; TYR-15; TYR-160 AND THR-161</scope>
    <scope>IDENTIFICATION BY MASS SPECTROMETRY</scope>
    <source>
        <tissue>Embryo</tissue>
    </source>
</reference>
<reference key="12">
    <citation type="journal article" date="2018" name="PLoS Biol.">
        <title>Rif1 prolongs the embryonic S phase at the Drosophila mid-blastula transition.</title>
        <authorList>
            <person name="Seller C.A."/>
            <person name="O'Farrell P.H."/>
        </authorList>
    </citation>
    <scope>FUNCTION</scope>
</reference>
<gene>
    <name evidence="13" type="primary">Cdk1</name>
    <name evidence="13" type="synonym">cdc2</name>
    <name evidence="13" type="ORF">CG5363</name>
</gene>
<proteinExistence type="evidence at protein level"/>
<dbReference type="EC" id="2.7.11.22"/>
<dbReference type="EC" id="2.7.11.23"/>
<dbReference type="EMBL" id="X57485">
    <property type="protein sequence ID" value="CAA40723.1"/>
    <property type="molecule type" value="mRNA"/>
</dbReference>
<dbReference type="EMBL" id="X57496">
    <property type="protein sequence ID" value="CAA40733.1"/>
    <property type="molecule type" value="mRNA"/>
</dbReference>
<dbReference type="EMBL" id="S66801">
    <property type="protein sequence ID" value="AAP13986.1"/>
    <property type="molecule type" value="Genomic_DNA"/>
</dbReference>
<dbReference type="EMBL" id="S66804">
    <property type="protein sequence ID" value="AAP13987.1"/>
    <property type="molecule type" value="Genomic_DNA"/>
</dbReference>
<dbReference type="EMBL" id="S66805">
    <property type="protein sequence ID" value="AAP13988.1"/>
    <property type="molecule type" value="Genomic_DNA"/>
</dbReference>
<dbReference type="EMBL" id="S66807">
    <property type="protein sequence ID" value="AAP13989.1"/>
    <property type="molecule type" value="Genomic_DNA"/>
</dbReference>
<dbReference type="EMBL" id="S66810">
    <property type="protein sequence ID" value="AAP13990.1"/>
    <property type="molecule type" value="Genomic_DNA"/>
</dbReference>
<dbReference type="EMBL" id="AM294319">
    <property type="protein sequence ID" value="CAL26249.1"/>
    <property type="molecule type" value="Genomic_DNA"/>
</dbReference>
<dbReference type="EMBL" id="AM294320">
    <property type="protein sequence ID" value="CAL26250.1"/>
    <property type="molecule type" value="Genomic_DNA"/>
</dbReference>
<dbReference type="EMBL" id="AM294321">
    <property type="protein sequence ID" value="CAL26251.1"/>
    <property type="molecule type" value="Genomic_DNA"/>
</dbReference>
<dbReference type="EMBL" id="AM294322">
    <property type="protein sequence ID" value="CAL26252.1"/>
    <property type="molecule type" value="Genomic_DNA"/>
</dbReference>
<dbReference type="EMBL" id="AM294323">
    <property type="protein sequence ID" value="CAL26253.1"/>
    <property type="molecule type" value="Genomic_DNA"/>
</dbReference>
<dbReference type="EMBL" id="AM294324">
    <property type="protein sequence ID" value="CAL26254.1"/>
    <property type="molecule type" value="Genomic_DNA"/>
</dbReference>
<dbReference type="EMBL" id="AM294325">
    <property type="protein sequence ID" value="CAL26255.1"/>
    <property type="molecule type" value="Genomic_DNA"/>
</dbReference>
<dbReference type="EMBL" id="AM294326">
    <property type="protein sequence ID" value="CAL26256.1"/>
    <property type="molecule type" value="Genomic_DNA"/>
</dbReference>
<dbReference type="EMBL" id="AM294327">
    <property type="protein sequence ID" value="CAL26257.1"/>
    <property type="molecule type" value="Genomic_DNA"/>
</dbReference>
<dbReference type="EMBL" id="AM294328">
    <property type="protein sequence ID" value="CAL26258.1"/>
    <property type="molecule type" value="Genomic_DNA"/>
</dbReference>
<dbReference type="EMBL" id="AM294329">
    <property type="protein sequence ID" value="CAL26259.1"/>
    <property type="molecule type" value="Genomic_DNA"/>
</dbReference>
<dbReference type="EMBL" id="AE014134">
    <property type="protein sequence ID" value="AAF52932.1"/>
    <property type="molecule type" value="Genomic_DNA"/>
</dbReference>
<dbReference type="EMBL" id="AY061450">
    <property type="protein sequence ID" value="AAL28998.1"/>
    <property type="molecule type" value="mRNA"/>
</dbReference>
<dbReference type="PIR" id="S12009">
    <property type="entry name" value="S12009"/>
</dbReference>
<dbReference type="RefSeq" id="NP_476797.1">
    <property type="nucleotide sequence ID" value="NM_057449.4"/>
</dbReference>
<dbReference type="SMR" id="P23572"/>
<dbReference type="BioGRID" id="60495">
    <property type="interactions" value="57"/>
</dbReference>
<dbReference type="DIP" id="DIP-649N"/>
<dbReference type="FunCoup" id="P23572">
    <property type="interactions" value="1489"/>
</dbReference>
<dbReference type="IntAct" id="P23572">
    <property type="interactions" value="27"/>
</dbReference>
<dbReference type="MINT" id="P23572"/>
<dbReference type="STRING" id="7227.FBpp0079641"/>
<dbReference type="iPTMnet" id="P23572"/>
<dbReference type="PaxDb" id="7227-FBpp0079641"/>
<dbReference type="EnsemblMetazoa" id="FBtr0080051">
    <property type="protein sequence ID" value="FBpp0079641"/>
    <property type="gene ID" value="FBgn0004106"/>
</dbReference>
<dbReference type="GeneID" id="34411"/>
<dbReference type="KEGG" id="dme:Dmel_CG5363"/>
<dbReference type="AGR" id="FB:FBgn0004106"/>
<dbReference type="CTD" id="983"/>
<dbReference type="FlyBase" id="FBgn0004106">
    <property type="gene designation" value="Cdk1"/>
</dbReference>
<dbReference type="VEuPathDB" id="VectorBase:FBgn0004106"/>
<dbReference type="eggNOG" id="KOG0594">
    <property type="taxonomic scope" value="Eukaryota"/>
</dbReference>
<dbReference type="GeneTree" id="ENSGT00940000153335"/>
<dbReference type="HOGENOM" id="CLU_000288_181_1_1"/>
<dbReference type="InParanoid" id="P23572"/>
<dbReference type="OMA" id="YLYQITR"/>
<dbReference type="OrthoDB" id="1732493at2759"/>
<dbReference type="PhylomeDB" id="P23572"/>
<dbReference type="Reactome" id="R-DME-110056">
    <property type="pathway name" value="MAPK3 (ERK1) activation"/>
</dbReference>
<dbReference type="Reactome" id="R-DME-174048">
    <property type="pathway name" value="APC/C:Cdc20 mediated degradation of Cyclin B"/>
</dbReference>
<dbReference type="Reactome" id="R-DME-174184">
    <property type="pathway name" value="Cdc20:Phospho-APC/C mediated degradation of Cyclin A"/>
</dbReference>
<dbReference type="Reactome" id="R-DME-176408">
    <property type="pathway name" value="Regulation of APC/C activators between G1/S and early anaphase"/>
</dbReference>
<dbReference type="Reactome" id="R-DME-176412">
    <property type="pathway name" value="Phosphorylation of the APC/C"/>
</dbReference>
<dbReference type="Reactome" id="R-DME-176417">
    <property type="pathway name" value="Phosphorylation of Emi1"/>
</dbReference>
<dbReference type="Reactome" id="R-DME-2500257">
    <property type="pathway name" value="Resolution of Sister Chromatid Cohesion"/>
</dbReference>
<dbReference type="Reactome" id="R-DME-2565942">
    <property type="pathway name" value="Regulation of PLK1 Activity at G2/M Transition"/>
</dbReference>
<dbReference type="Reactome" id="R-DME-3301854">
    <property type="pathway name" value="Nuclear Pore Complex (NPC) Disassembly"/>
</dbReference>
<dbReference type="Reactome" id="R-DME-4419969">
    <property type="pathway name" value="Depolymerization of the Nuclear Lamina"/>
</dbReference>
<dbReference type="Reactome" id="R-DME-6804114">
    <property type="pathway name" value="TP53 Regulates Transcription of Genes Involved in G2 Cell Cycle Arrest"/>
</dbReference>
<dbReference type="Reactome" id="R-DME-68875">
    <property type="pathway name" value="Mitotic Prophase"/>
</dbReference>
<dbReference type="Reactome" id="R-DME-69273">
    <property type="pathway name" value="Cyclin A/B1/B2 associated events during G2/M transition"/>
</dbReference>
<dbReference type="Reactome" id="R-DME-69478">
    <property type="pathway name" value="G2/M DNA replication checkpoint"/>
</dbReference>
<dbReference type="Reactome" id="R-DME-75035">
    <property type="pathway name" value="Chk1/Chk2(Cds1) mediated inactivation of Cyclin B:Cdk1 complex"/>
</dbReference>
<dbReference type="Reactome" id="R-DME-8878166">
    <property type="pathway name" value="Transcriptional regulation by RUNX2"/>
</dbReference>
<dbReference type="Reactome" id="R-DME-9833482">
    <property type="pathway name" value="PKR-mediated signaling"/>
</dbReference>
<dbReference type="SignaLink" id="P23572"/>
<dbReference type="BioGRID-ORCS" id="34411">
    <property type="hits" value="1 hit in 3 CRISPR screens"/>
</dbReference>
<dbReference type="GenomeRNAi" id="34411"/>
<dbReference type="PRO" id="PR:P23572"/>
<dbReference type="Proteomes" id="UP000000803">
    <property type="component" value="Chromosome 2L"/>
</dbReference>
<dbReference type="Bgee" id="FBgn0004106">
    <property type="expression patterns" value="Expressed in secondary oocyte and 73 other cell types or tissues"/>
</dbReference>
<dbReference type="ExpressionAtlas" id="P23572">
    <property type="expression patterns" value="baseline and differential"/>
</dbReference>
<dbReference type="GO" id="GO:0045169">
    <property type="term" value="C:fusome"/>
    <property type="evidence" value="ECO:0000314"/>
    <property type="project" value="CACAO"/>
</dbReference>
<dbReference type="GO" id="GO:0005634">
    <property type="term" value="C:nucleus"/>
    <property type="evidence" value="ECO:0000318"/>
    <property type="project" value="GO_Central"/>
</dbReference>
<dbReference type="GO" id="GO:0005524">
    <property type="term" value="F:ATP binding"/>
    <property type="evidence" value="ECO:0007669"/>
    <property type="project" value="UniProtKB-KW"/>
</dbReference>
<dbReference type="GO" id="GO:0004693">
    <property type="term" value="F:cyclin-dependent protein serine/threonine kinase activity"/>
    <property type="evidence" value="ECO:0000316"/>
    <property type="project" value="FlyBase"/>
</dbReference>
<dbReference type="GO" id="GO:0004672">
    <property type="term" value="F:protein kinase activity"/>
    <property type="evidence" value="ECO:0000314"/>
    <property type="project" value="FlyBase"/>
</dbReference>
<dbReference type="GO" id="GO:0106310">
    <property type="term" value="F:protein serine kinase activity"/>
    <property type="evidence" value="ECO:0007669"/>
    <property type="project" value="RHEA"/>
</dbReference>
<dbReference type="GO" id="GO:0004674">
    <property type="term" value="F:protein serine/threonine kinase activity"/>
    <property type="evidence" value="ECO:0000314"/>
    <property type="project" value="FlyBase"/>
</dbReference>
<dbReference type="GO" id="GO:0008353">
    <property type="term" value="F:RNA polymerase II CTD heptapeptide repeat kinase activity"/>
    <property type="evidence" value="ECO:0007669"/>
    <property type="project" value="UniProtKB-EC"/>
</dbReference>
<dbReference type="GO" id="GO:0055059">
    <property type="term" value="P:asymmetric neuroblast division"/>
    <property type="evidence" value="ECO:0000315"/>
    <property type="project" value="FlyBase"/>
</dbReference>
<dbReference type="GO" id="GO:0001700">
    <property type="term" value="P:embryonic development via the syncytial blastoderm"/>
    <property type="evidence" value="ECO:0000315"/>
    <property type="project" value="UniProtKB"/>
</dbReference>
<dbReference type="GO" id="GO:0030707">
    <property type="term" value="P:follicle cell of egg chamber development"/>
    <property type="evidence" value="ECO:0000315"/>
    <property type="project" value="FlyBase"/>
</dbReference>
<dbReference type="GO" id="GO:0000082">
    <property type="term" value="P:G1/S transition of mitotic cell cycle"/>
    <property type="evidence" value="ECO:0000316"/>
    <property type="project" value="FlyBase"/>
</dbReference>
<dbReference type="GO" id="GO:0000086">
    <property type="term" value="P:G2/M transition of mitotic cell cycle"/>
    <property type="evidence" value="ECO:0000315"/>
    <property type="project" value="FlyBase"/>
</dbReference>
<dbReference type="GO" id="GO:0048142">
    <property type="term" value="P:germarium-derived cystoblast division"/>
    <property type="evidence" value="ECO:0000315"/>
    <property type="project" value="FlyBase"/>
</dbReference>
<dbReference type="GO" id="GO:0007140">
    <property type="term" value="P:male meiotic nuclear division"/>
    <property type="evidence" value="ECO:0000315"/>
    <property type="project" value="FlyBase"/>
</dbReference>
<dbReference type="GO" id="GO:0007095">
    <property type="term" value="P:mitotic G2 DNA damage checkpoint signaling"/>
    <property type="evidence" value="ECO:0000315"/>
    <property type="project" value="FlyBase"/>
</dbReference>
<dbReference type="GO" id="GO:0044818">
    <property type="term" value="P:mitotic G2/M transition checkpoint"/>
    <property type="evidence" value="ECO:0000315"/>
    <property type="project" value="FlyBase"/>
</dbReference>
<dbReference type="GO" id="GO:0030174">
    <property type="term" value="P:regulation of DNA-templated DNA replication initiation"/>
    <property type="evidence" value="ECO:0000315"/>
    <property type="project" value="UniProtKB"/>
</dbReference>
<dbReference type="GO" id="GO:1901990">
    <property type="term" value="P:regulation of mitotic cell cycle phase transition"/>
    <property type="evidence" value="ECO:0000315"/>
    <property type="project" value="UniProtKB"/>
</dbReference>
<dbReference type="GO" id="GO:0032880">
    <property type="term" value="P:regulation of protein localization"/>
    <property type="evidence" value="ECO:0000315"/>
    <property type="project" value="FlyBase"/>
</dbReference>
<dbReference type="GO" id="GO:0007284">
    <property type="term" value="P:spermatogonial cell division"/>
    <property type="evidence" value="ECO:0000315"/>
    <property type="project" value="FlyBase"/>
</dbReference>
<dbReference type="CDD" id="cd07861">
    <property type="entry name" value="STKc_CDK1_euk"/>
    <property type="match status" value="1"/>
</dbReference>
<dbReference type="FunFam" id="1.10.510.10:FF:000231">
    <property type="entry name" value="Cyclin-dependent kinase 1"/>
    <property type="match status" value="1"/>
</dbReference>
<dbReference type="FunFam" id="3.30.200.20:FF:000027">
    <property type="entry name" value="Putative Cyclin-dependent kinase 1"/>
    <property type="match status" value="1"/>
</dbReference>
<dbReference type="Gene3D" id="3.30.200.20">
    <property type="entry name" value="Phosphorylase Kinase, domain 1"/>
    <property type="match status" value="1"/>
</dbReference>
<dbReference type="Gene3D" id="1.10.510.10">
    <property type="entry name" value="Transferase(Phosphotransferase) domain 1"/>
    <property type="match status" value="1"/>
</dbReference>
<dbReference type="InterPro" id="IPR050108">
    <property type="entry name" value="CDK"/>
</dbReference>
<dbReference type="InterPro" id="IPR011009">
    <property type="entry name" value="Kinase-like_dom_sf"/>
</dbReference>
<dbReference type="InterPro" id="IPR000719">
    <property type="entry name" value="Prot_kinase_dom"/>
</dbReference>
<dbReference type="InterPro" id="IPR017441">
    <property type="entry name" value="Protein_kinase_ATP_BS"/>
</dbReference>
<dbReference type="InterPro" id="IPR008271">
    <property type="entry name" value="Ser/Thr_kinase_AS"/>
</dbReference>
<dbReference type="PANTHER" id="PTHR24056">
    <property type="entry name" value="CELL DIVISION PROTEIN KINASE"/>
    <property type="match status" value="1"/>
</dbReference>
<dbReference type="PANTHER" id="PTHR24056:SF334">
    <property type="entry name" value="CYCLIN-DEPENDENT KINASE 1"/>
    <property type="match status" value="1"/>
</dbReference>
<dbReference type="Pfam" id="PF00069">
    <property type="entry name" value="Pkinase"/>
    <property type="match status" value="1"/>
</dbReference>
<dbReference type="SMART" id="SM00220">
    <property type="entry name" value="S_TKc"/>
    <property type="match status" value="1"/>
</dbReference>
<dbReference type="SUPFAM" id="SSF56112">
    <property type="entry name" value="Protein kinase-like (PK-like)"/>
    <property type="match status" value="1"/>
</dbReference>
<dbReference type="PROSITE" id="PS00107">
    <property type="entry name" value="PROTEIN_KINASE_ATP"/>
    <property type="match status" value="1"/>
</dbReference>
<dbReference type="PROSITE" id="PS50011">
    <property type="entry name" value="PROTEIN_KINASE_DOM"/>
    <property type="match status" value="1"/>
</dbReference>
<dbReference type="PROSITE" id="PS00108">
    <property type="entry name" value="PROTEIN_KINASE_ST"/>
    <property type="match status" value="1"/>
</dbReference>
<protein>
    <recommendedName>
        <fullName>Cyclin-dependent kinase 1</fullName>
        <shortName>CDK1</shortName>
        <ecNumber>2.7.11.22</ecNumber>
        <ecNumber>2.7.11.23</ecNumber>
    </recommendedName>
    <alternativeName>
        <fullName>Cell division control protein 2 homolog</fullName>
    </alternativeName>
    <alternativeName>
        <fullName>Cell division protein kinase 1</fullName>
    </alternativeName>
    <alternativeName>
        <fullName>p34 protein kinase</fullName>
    </alternativeName>
</protein>
<accession>P23572</accession>
<accession>A0ANT1</accession>
<accession>Q86FT5</accession>
<accession>Q86FT6</accession>
<accession>Q86FT7</accession>
<accession>Q86FT8</accession>
<accession>Q86FT9</accession>
<accession>Q9TX68</accession>
<accession>Q9TX69</accession>
<accession>Q9TX70</accession>
<accession>Q9TX71</accession>
<accession>Q9TX72</accession>
<accession>Q9TX73</accession>
<accession>Q9TX74</accession>
<accession>Q9VKX5</accession>
<comment type="function">
    <text evidence="5 8 9">Plays a key role in the control of the eukaryotic cell cycle (PubMed:15581871, PubMed:2120044). Required for entry into S-phase and mitosis (PubMed:15581871, PubMed:2120044, PubMed:29746464). In embryos, promotes the release of Rif1 from chromatin during mid-blastula transition (PubMed:29746464). p34 is a component of the kinase complex that phosphorylates the repetitive C-terminus of RNA polymerase II (PubMed:2120044).</text>
</comment>
<comment type="catalytic activity">
    <reaction>
        <text>L-seryl-[protein] + ATP = O-phospho-L-seryl-[protein] + ADP + H(+)</text>
        <dbReference type="Rhea" id="RHEA:17989"/>
        <dbReference type="Rhea" id="RHEA-COMP:9863"/>
        <dbReference type="Rhea" id="RHEA-COMP:11604"/>
        <dbReference type="ChEBI" id="CHEBI:15378"/>
        <dbReference type="ChEBI" id="CHEBI:29999"/>
        <dbReference type="ChEBI" id="CHEBI:30616"/>
        <dbReference type="ChEBI" id="CHEBI:83421"/>
        <dbReference type="ChEBI" id="CHEBI:456216"/>
        <dbReference type="EC" id="2.7.11.22"/>
    </reaction>
</comment>
<comment type="catalytic activity">
    <reaction>
        <text>L-threonyl-[protein] + ATP = O-phospho-L-threonyl-[protein] + ADP + H(+)</text>
        <dbReference type="Rhea" id="RHEA:46608"/>
        <dbReference type="Rhea" id="RHEA-COMP:11060"/>
        <dbReference type="Rhea" id="RHEA-COMP:11605"/>
        <dbReference type="ChEBI" id="CHEBI:15378"/>
        <dbReference type="ChEBI" id="CHEBI:30013"/>
        <dbReference type="ChEBI" id="CHEBI:30616"/>
        <dbReference type="ChEBI" id="CHEBI:61977"/>
        <dbReference type="ChEBI" id="CHEBI:456216"/>
        <dbReference type="EC" id="2.7.11.22"/>
    </reaction>
</comment>
<comment type="catalytic activity">
    <reaction>
        <text>[DNA-directed RNA polymerase] + ATP = phospho-[DNA-directed RNA polymerase] + ADP + H(+)</text>
        <dbReference type="Rhea" id="RHEA:10216"/>
        <dbReference type="Rhea" id="RHEA-COMP:11321"/>
        <dbReference type="Rhea" id="RHEA-COMP:11322"/>
        <dbReference type="ChEBI" id="CHEBI:15378"/>
        <dbReference type="ChEBI" id="CHEBI:30616"/>
        <dbReference type="ChEBI" id="CHEBI:43176"/>
        <dbReference type="ChEBI" id="CHEBI:68546"/>
        <dbReference type="ChEBI" id="CHEBI:456216"/>
        <dbReference type="EC" id="2.7.11.23"/>
    </reaction>
</comment>
<comment type="activity regulation">
    <text evidence="1">Phosphorylation at Thr-14 or Tyr-15 inactivates the enzyme, while phosphorylation at Thr-161 activates it.</text>
</comment>
<comment type="subunit">
    <text evidence="6">Forms a stable but non-covalent complex with a regulatory subunit and with a cyclin. Component of the Frs-CycA-Cdk1 complex composed of Cdk1, CycA and Z600 (PubMed:17431409).</text>
</comment>
<comment type="interaction">
    <interactant intactId="EBI-108689">
        <id>P23572</id>
    </interactant>
    <interactant intactId="EBI-122930">
        <id>Q9VHN1</id>
        <label>Cks85A</label>
    </interactant>
    <organismsDiffer>false</organismsDiffer>
    <experiments>5</experiments>
</comment>
<comment type="interaction">
    <interactant intactId="EBI-108689">
        <id>P23572</id>
    </interactant>
    <interactant intactId="EBI-240333">
        <id>P14785</id>
        <label>CycA</label>
    </interactant>
    <organismsDiffer>false</organismsDiffer>
    <experiments>2</experiments>
</comment>
<comment type="interaction">
    <interactant intactId="EBI-108689">
        <id>P23572</id>
    </interactant>
    <interactant intactId="EBI-150964">
        <id>Q9I7I0</id>
        <label>CycB3</label>
    </interactant>
    <organismsDiffer>false</organismsDiffer>
    <experiments>3</experiments>
</comment>
<comment type="interaction">
    <interactant intactId="EBI-108689">
        <id>P23572</id>
    </interactant>
    <interactant intactId="EBI-195485">
        <id>P25008</id>
        <label>CycC</label>
    </interactant>
    <organismsDiffer>false</organismsDiffer>
    <experiments>4</experiments>
</comment>
<comment type="interaction">
    <interactant intactId="EBI-108689">
        <id>P23572</id>
    </interactant>
    <interactant intactId="EBI-203549">
        <id>P54733</id>
        <label>CycE</label>
    </interactant>
    <organismsDiffer>false</organismsDiffer>
    <experiments>6</experiments>
</comment>
<comment type="interaction">
    <interactant intactId="EBI-108689">
        <id>P23572</id>
    </interactant>
    <interactant intactId="EBI-130995">
        <id>Q961D1</id>
        <label>CycK</label>
    </interactant>
    <organismsDiffer>false</organismsDiffer>
    <experiments>4</experiments>
</comment>
<comment type="interaction">
    <interactant intactId="EBI-108689">
        <id>P23572</id>
    </interactant>
    <interactant intactId="EBI-138996">
        <id>Q03019</id>
        <label>twe</label>
    </interactant>
    <organismsDiffer>false</organismsDiffer>
    <experiments>4</experiments>
</comment>
<comment type="subcellular location">
    <subcellularLocation>
        <location evidence="1">Nucleus</location>
    </subcellularLocation>
</comment>
<comment type="developmental stage">
    <text evidence="8 11">Expressed both maternally and zygotically (PubMed:2120044, PubMed:8405984). High levels of expression when mitosis is elevated; highest levels of expression are in early embryos with levels decreasing during embryogenesis and remaining low throughout most of larval development, and expression levels are also increased in unfertilized eggs and adult females (PubMed:2120044).</text>
</comment>
<comment type="similarity">
    <text evidence="12">Belongs to the protein kinase superfamily. CMGC Ser/Thr protein kinase family. CDC2/CDKX subfamily.</text>
</comment>
<sequence>MEDFEKIEKIGEGTYGVVYKGRNRLTGQIVAMKKIRLESDDEGVPSTAIREISLLKELKHENIVCLEDVLMEENRIYLIFEFLSMDLKKYMDSLPVDKHMESELVRSYLYQITSAILFCHRRRVLHRDLKPQNLLIDKSGLIKVADFGLGRSFGIPVRIYTHEIVTLWYRAPEVLLGSPRYSCPVDIWSIGCIFAEMATRKPLFQGDSEIDQLFRMFRILKTPTEDIWPGVTSLPDYKNTFPCWSTNQLTNQLKNLDANGIDLIQKMLIYDPVHRISAKDILEHPYFNGFQSGLVRN</sequence>
<evidence type="ECO:0000250" key="1"/>
<evidence type="ECO:0000255" key="2"/>
<evidence type="ECO:0000255" key="3">
    <source>
        <dbReference type="PROSITE-ProRule" id="PRU00159"/>
    </source>
</evidence>
<evidence type="ECO:0000255" key="4">
    <source>
        <dbReference type="PROSITE-ProRule" id="PRU10027"/>
    </source>
</evidence>
<evidence type="ECO:0000269" key="5">
    <source>
    </source>
</evidence>
<evidence type="ECO:0000269" key="6">
    <source>
    </source>
</evidence>
<evidence type="ECO:0000269" key="7">
    <source>
    </source>
</evidence>
<evidence type="ECO:0000269" key="8">
    <source>
    </source>
</evidence>
<evidence type="ECO:0000269" key="9">
    <source>
    </source>
</evidence>
<evidence type="ECO:0000269" key="10">
    <source>
    </source>
</evidence>
<evidence type="ECO:0000269" key="11">
    <source>
    </source>
</evidence>
<evidence type="ECO:0000305" key="12"/>
<evidence type="ECO:0000312" key="13">
    <source>
        <dbReference type="FlyBase" id="FBgn0004106"/>
    </source>
</evidence>
<organism>
    <name type="scientific">Drosophila melanogaster</name>
    <name type="common">Fruit fly</name>
    <dbReference type="NCBI Taxonomy" id="7227"/>
    <lineage>
        <taxon>Eukaryota</taxon>
        <taxon>Metazoa</taxon>
        <taxon>Ecdysozoa</taxon>
        <taxon>Arthropoda</taxon>
        <taxon>Hexapoda</taxon>
        <taxon>Insecta</taxon>
        <taxon>Pterygota</taxon>
        <taxon>Neoptera</taxon>
        <taxon>Endopterygota</taxon>
        <taxon>Diptera</taxon>
        <taxon>Brachycera</taxon>
        <taxon>Muscomorpha</taxon>
        <taxon>Ephydroidea</taxon>
        <taxon>Drosophilidae</taxon>
        <taxon>Drosophila</taxon>
        <taxon>Sophophora</taxon>
    </lineage>
</organism>
<name>CDK1_DROME</name>